<sequence length="360" mass="40642">MKTSMQRKLDQLSTRLAELNDLLSRENVTADLDQYRRLTREHAELGPVVEQYALWRQSRNDETAAQELLADASMRDFAEDEIRSARERMVRLEAELQKMLLPKDPNDDRNIFLEIRAGAGGDESALFAGDLLRMYLRFAERQRWQVEMMSESASDLGGYKEVIVRIAGQGAYSRLKFESGGHRVQRVPATETQGRIHTSACTVAVMPEADEIGEVEINPADLRIDTFRASGAGGQHINKTDSAVRVTHIPTGIVVECQDDRSQHKNKDRALKVLAARIKDKQYHEQHAKEAATRKSLIGSGDRSERIRTYNFPQGRMTDHRINLTLYRLEALMDGDLDELIGALVTEHQAELLASLGDTD</sequence>
<organism>
    <name type="scientific">Burkholderia ambifaria (strain MC40-6)</name>
    <dbReference type="NCBI Taxonomy" id="398577"/>
    <lineage>
        <taxon>Bacteria</taxon>
        <taxon>Pseudomonadati</taxon>
        <taxon>Pseudomonadota</taxon>
        <taxon>Betaproteobacteria</taxon>
        <taxon>Burkholderiales</taxon>
        <taxon>Burkholderiaceae</taxon>
        <taxon>Burkholderia</taxon>
        <taxon>Burkholderia cepacia complex</taxon>
    </lineage>
</organism>
<comment type="function">
    <text evidence="1">Peptide chain release factor 1 directs the termination of translation in response to the peptide chain termination codons UAG and UAA.</text>
</comment>
<comment type="subcellular location">
    <subcellularLocation>
        <location evidence="1">Cytoplasm</location>
    </subcellularLocation>
</comment>
<comment type="PTM">
    <text evidence="1">Methylated by PrmC. Methylation increases the termination efficiency of RF1.</text>
</comment>
<comment type="similarity">
    <text evidence="1">Belongs to the prokaryotic/mitochondrial release factor family.</text>
</comment>
<protein>
    <recommendedName>
        <fullName evidence="1">Peptide chain release factor 1</fullName>
        <shortName evidence="1">RF-1</shortName>
    </recommendedName>
</protein>
<dbReference type="EMBL" id="CP001025">
    <property type="protein sequence ID" value="ACB62937.1"/>
    <property type="molecule type" value="Genomic_DNA"/>
</dbReference>
<dbReference type="RefSeq" id="WP_006755622.1">
    <property type="nucleotide sequence ID" value="NC_010551.1"/>
</dbReference>
<dbReference type="SMR" id="B1YSD5"/>
<dbReference type="GeneID" id="93084174"/>
<dbReference type="KEGG" id="bac:BamMC406_0440"/>
<dbReference type="HOGENOM" id="CLU_036856_0_1_4"/>
<dbReference type="OrthoDB" id="9806673at2"/>
<dbReference type="Proteomes" id="UP000001680">
    <property type="component" value="Chromosome 1"/>
</dbReference>
<dbReference type="GO" id="GO:0005737">
    <property type="term" value="C:cytoplasm"/>
    <property type="evidence" value="ECO:0007669"/>
    <property type="project" value="UniProtKB-SubCell"/>
</dbReference>
<dbReference type="GO" id="GO:0016149">
    <property type="term" value="F:translation release factor activity, codon specific"/>
    <property type="evidence" value="ECO:0007669"/>
    <property type="project" value="UniProtKB-UniRule"/>
</dbReference>
<dbReference type="FunFam" id="3.30.160.20:FF:000004">
    <property type="entry name" value="Peptide chain release factor 1"/>
    <property type="match status" value="1"/>
</dbReference>
<dbReference type="FunFam" id="3.30.70.1660:FF:000002">
    <property type="entry name" value="Peptide chain release factor 1"/>
    <property type="match status" value="1"/>
</dbReference>
<dbReference type="FunFam" id="3.30.70.1660:FF:000004">
    <property type="entry name" value="Peptide chain release factor 1"/>
    <property type="match status" value="1"/>
</dbReference>
<dbReference type="Gene3D" id="3.30.160.20">
    <property type="match status" value="1"/>
</dbReference>
<dbReference type="Gene3D" id="3.30.70.1660">
    <property type="match status" value="2"/>
</dbReference>
<dbReference type="Gene3D" id="6.10.140.1950">
    <property type="match status" value="1"/>
</dbReference>
<dbReference type="HAMAP" id="MF_00093">
    <property type="entry name" value="Rel_fac_1"/>
    <property type="match status" value="1"/>
</dbReference>
<dbReference type="InterPro" id="IPR005139">
    <property type="entry name" value="PCRF"/>
</dbReference>
<dbReference type="InterPro" id="IPR000352">
    <property type="entry name" value="Pep_chain_release_fac_I"/>
</dbReference>
<dbReference type="InterPro" id="IPR045853">
    <property type="entry name" value="Pep_chain_release_fac_I_sf"/>
</dbReference>
<dbReference type="InterPro" id="IPR050057">
    <property type="entry name" value="Prokaryotic/Mito_RF"/>
</dbReference>
<dbReference type="InterPro" id="IPR004373">
    <property type="entry name" value="RF-1"/>
</dbReference>
<dbReference type="NCBIfam" id="TIGR00019">
    <property type="entry name" value="prfA"/>
    <property type="match status" value="1"/>
</dbReference>
<dbReference type="NCBIfam" id="NF001859">
    <property type="entry name" value="PRK00591.1"/>
    <property type="match status" value="1"/>
</dbReference>
<dbReference type="PANTHER" id="PTHR43804">
    <property type="entry name" value="LD18447P"/>
    <property type="match status" value="1"/>
</dbReference>
<dbReference type="PANTHER" id="PTHR43804:SF7">
    <property type="entry name" value="LD18447P"/>
    <property type="match status" value="1"/>
</dbReference>
<dbReference type="Pfam" id="PF03462">
    <property type="entry name" value="PCRF"/>
    <property type="match status" value="1"/>
</dbReference>
<dbReference type="Pfam" id="PF00472">
    <property type="entry name" value="RF-1"/>
    <property type="match status" value="1"/>
</dbReference>
<dbReference type="SMART" id="SM00937">
    <property type="entry name" value="PCRF"/>
    <property type="match status" value="1"/>
</dbReference>
<dbReference type="SUPFAM" id="SSF75620">
    <property type="entry name" value="Release factor"/>
    <property type="match status" value="1"/>
</dbReference>
<dbReference type="PROSITE" id="PS00745">
    <property type="entry name" value="RF_PROK_I"/>
    <property type="match status" value="1"/>
</dbReference>
<accession>B1YSD5</accession>
<feature type="chain" id="PRO_1000093429" description="Peptide chain release factor 1">
    <location>
        <begin position="1"/>
        <end position="360"/>
    </location>
</feature>
<feature type="modified residue" description="N5-methylglutamine" evidence="1">
    <location>
        <position position="235"/>
    </location>
</feature>
<keyword id="KW-0963">Cytoplasm</keyword>
<keyword id="KW-0488">Methylation</keyword>
<keyword id="KW-0648">Protein biosynthesis</keyword>
<proteinExistence type="inferred from homology"/>
<gene>
    <name evidence="1" type="primary">prfA</name>
    <name type="ordered locus">BamMC406_0440</name>
</gene>
<reference key="1">
    <citation type="submission" date="2008-04" db="EMBL/GenBank/DDBJ databases">
        <title>Complete sequence of chromosome 1 of Burkholderia ambifaria MC40-6.</title>
        <authorList>
            <person name="Copeland A."/>
            <person name="Lucas S."/>
            <person name="Lapidus A."/>
            <person name="Glavina del Rio T."/>
            <person name="Dalin E."/>
            <person name="Tice H."/>
            <person name="Pitluck S."/>
            <person name="Chain P."/>
            <person name="Malfatti S."/>
            <person name="Shin M."/>
            <person name="Vergez L."/>
            <person name="Lang D."/>
            <person name="Schmutz J."/>
            <person name="Larimer F."/>
            <person name="Land M."/>
            <person name="Hauser L."/>
            <person name="Kyrpides N."/>
            <person name="Lykidis A."/>
            <person name="Ramette A."/>
            <person name="Konstantinidis K."/>
            <person name="Tiedje J."/>
            <person name="Richardson P."/>
        </authorList>
    </citation>
    <scope>NUCLEOTIDE SEQUENCE [LARGE SCALE GENOMIC DNA]</scope>
    <source>
        <strain>MC40-6</strain>
    </source>
</reference>
<evidence type="ECO:0000255" key="1">
    <source>
        <dbReference type="HAMAP-Rule" id="MF_00093"/>
    </source>
</evidence>
<name>RF1_BURA4</name>